<comment type="function">
    <text evidence="1 3">Plays a role in cell cycle regulation and chromosome integrity. Activates DnaA-dependent chromosomal DNA replication initiation ensuring that the chromosome is replicated at the right time during the cell cycle (By similarity). May regulate replication initiation through phosphorylation of a possible second messenger or metabolite, and by interacting with replication initiation proteins. Has ATPase activity with D-ribose and 2-deoxy-D-ribose in vitro, but not with choline. Involved in DNA damage response (PubMed:35576203).</text>
</comment>
<comment type="catalytic activity">
    <reaction evidence="3">
        <text>D-ribose + ATP = D-ribose 5-phosphate + ADP + H(+)</text>
        <dbReference type="Rhea" id="RHEA:13697"/>
        <dbReference type="ChEBI" id="CHEBI:15378"/>
        <dbReference type="ChEBI" id="CHEBI:30616"/>
        <dbReference type="ChEBI" id="CHEBI:47013"/>
        <dbReference type="ChEBI" id="CHEBI:78346"/>
        <dbReference type="ChEBI" id="CHEBI:456216"/>
        <dbReference type="EC" id="2.7.1.15"/>
    </reaction>
</comment>
<comment type="catalytic activity">
    <reaction evidence="3">
        <text>2-deoxy-D-ribose + ATP = 2-deoxy-D-ribose 5-phosphate + ADP + H(+)</text>
        <dbReference type="Rhea" id="RHEA:30871"/>
        <dbReference type="ChEBI" id="CHEBI:15378"/>
        <dbReference type="ChEBI" id="CHEBI:30616"/>
        <dbReference type="ChEBI" id="CHEBI:62877"/>
        <dbReference type="ChEBI" id="CHEBI:90761"/>
        <dbReference type="ChEBI" id="CHEBI:456216"/>
        <dbReference type="EC" id="2.7.1.229"/>
    </reaction>
</comment>
<comment type="activity regulation">
    <text evidence="3">Activated by D-ribose and 2-deoxy-D-ribose. Slightly activated by kanamycin and gentamicin.</text>
</comment>
<comment type="subunit">
    <text evidence="1 3">Monomer in solution. Interacts with DnaA (via domains I (1-82) and III (111-326)). Interacts with DnaB (PubMed:35576203). Interacts with FtsZ (By similarity).</text>
</comment>
<comment type="subcellular location">
    <subcellularLocation>
        <location evidence="1">Cytoplasm</location>
    </subcellularLocation>
</comment>
<comment type="disruption phenotype">
    <text evidence="2 3 4">Cells lacking this gene are slightly thinner and longer, but no anucleate cells are present and they have a growth rate similar to wild-type cells. Significantly decreased DNA replication initiation rate (PubMed:34373624). Suppresses the synthetic lethality of a dnaA1-yabA deletion for growth on rich me (PubMed:36053906). Susceptible to a broad range of DNA damage including mitomycin C (MMC), methyl methanesulfonate (MMS), ciprofloxacin, phleomycin and UV irradiation. Significant induction of the DNA damage response (SOS). Not sensitive to kanamycin or gentamicin (PubMed:35576203).</text>
</comment>
<comment type="similarity">
    <text evidence="7">Belongs to the aminoglycoside phosphotransferase family.</text>
</comment>
<comment type="sequence caution" evidence="7">
    <conflict type="erroneous initiation">
        <sequence resource="EMBL-CDS" id="CAB14970"/>
    </conflict>
    <text>Truncated N-terminus.</text>
</comment>
<gene>
    <name evidence="5 6" type="primary">ccrZ</name>
    <name evidence="5 6" type="synonym">ytmP</name>
    <name type="ordered locus">BSU29920</name>
</gene>
<evidence type="ECO:0000250" key="1">
    <source>
        <dbReference type="UniProtKB" id="A0A0H2ZQL5"/>
    </source>
</evidence>
<evidence type="ECO:0000269" key="2">
    <source>
    </source>
</evidence>
<evidence type="ECO:0000269" key="3">
    <source>
    </source>
</evidence>
<evidence type="ECO:0000269" key="4">
    <source>
    </source>
</evidence>
<evidence type="ECO:0000303" key="5">
    <source>
    </source>
</evidence>
<evidence type="ECO:0000303" key="6">
    <source>
    </source>
</evidence>
<evidence type="ECO:0000305" key="7"/>
<evidence type="ECO:0007744" key="8">
    <source>
        <dbReference type="PDB" id="7S3L"/>
    </source>
</evidence>
<evidence type="ECO:0007829" key="9">
    <source>
        <dbReference type="PDB" id="7S3L"/>
    </source>
</evidence>
<feature type="chain" id="PRO_0000387940" description="Cell cycle regulator CcrZ">
    <location>
        <begin position="1"/>
        <end position="269"/>
    </location>
</feature>
<feature type="short sequence motif" description="Brenner's motif [HXDhX3N]" evidence="1">
    <location>
        <begin position="164"/>
        <end position="171"/>
    </location>
</feature>
<feature type="short sequence motif" description="APH" evidence="1">
    <location>
        <begin position="180"/>
        <end position="203"/>
    </location>
</feature>
<feature type="active site" description="Proton acceptor" evidence="3">
    <location>
        <position position="166"/>
    </location>
</feature>
<feature type="binding site" evidence="3 8">
    <location>
        <position position="39"/>
    </location>
    <ligand>
        <name>ATP</name>
        <dbReference type="ChEBI" id="CHEBI:30616"/>
    </ligand>
</feature>
<feature type="binding site" evidence="3 8">
    <location>
        <position position="76"/>
    </location>
    <ligand>
        <name>ATP</name>
        <dbReference type="ChEBI" id="CHEBI:30616"/>
    </ligand>
</feature>
<feature type="binding site" evidence="3 8">
    <location>
        <position position="77"/>
    </location>
    <ligand>
        <name>ATP</name>
        <dbReference type="ChEBI" id="CHEBI:30616"/>
    </ligand>
</feature>
<feature type="binding site" evidence="3 8">
    <location>
        <position position="78"/>
    </location>
    <ligand>
        <name>ATP</name>
        <dbReference type="ChEBI" id="CHEBI:30616"/>
    </ligand>
</feature>
<feature type="binding site" evidence="3 8">
    <location>
        <position position="80"/>
    </location>
    <ligand>
        <name>ATP</name>
        <dbReference type="ChEBI" id="CHEBI:30616"/>
    </ligand>
</feature>
<feature type="mutagenesis site" description="No effect on susceptibility to DNA damage." evidence="3">
    <original>A</original>
    <variation>V</variation>
    <location>
        <position position="21"/>
    </location>
</feature>
<feature type="mutagenesis site" description="Loss of ability to complement for the deletion of this protein." evidence="3">
    <original>F</original>
    <variation>A</variation>
    <location>
        <position position="47"/>
    </location>
</feature>
<feature type="mutagenesis site" description="Loss of ability to complement for the deletion of this protein. Loss of native structure." evidence="3">
    <original>R</original>
    <variation>P</variation>
    <location>
        <position position="65"/>
    </location>
</feature>
<feature type="mutagenesis site" description="Able to complement for the deletion of this protein." evidence="3">
    <original>S</original>
    <variation>A</variation>
    <location>
        <position position="103"/>
    </location>
</feature>
<feature type="mutagenesis site" description="Able to complement for the deletion of this protein." evidence="3">
    <original>R</original>
    <variation>A</variation>
    <location>
        <position position="112"/>
    </location>
</feature>
<feature type="mutagenesis site" description="Loss of ATPase activity. Loss of ability to complement for the deletion of this protein." evidence="3">
    <original>D</original>
    <variation>A</variation>
    <location>
        <position position="166"/>
    </location>
</feature>
<feature type="mutagenesis site" description="No effect on activity." evidence="3">
    <original>N</original>
    <variation>A</variation>
    <location>
        <position position="168"/>
    </location>
</feature>
<feature type="mutagenesis site" description="Loss of ability to complement for the deletion of this protein." evidence="3">
    <original>N</original>
    <variation>A</variation>
    <location>
        <position position="171"/>
    </location>
</feature>
<feature type="mutagenesis site" description="Loss of ability to complement for the deletion of this protein." evidence="3">
    <original>D</original>
    <variation>A</variation>
    <location>
        <position position="184"/>
    </location>
</feature>
<feature type="mutagenesis site" description="No effect on activity." evidence="3">
    <original>F</original>
    <variation>A</variation>
    <location>
        <position position="240"/>
    </location>
</feature>
<feature type="mutagenesis site" description="No effect on activity." evidence="3">
    <original>W</original>
    <variation>A</variation>
    <location>
        <position position="243"/>
    </location>
</feature>
<feature type="strand" evidence="9">
    <location>
        <begin position="16"/>
        <end position="20"/>
    </location>
</feature>
<feature type="strand" evidence="9">
    <location>
        <begin position="27"/>
        <end position="33"/>
    </location>
</feature>
<feature type="strand" evidence="9">
    <location>
        <begin position="36"/>
        <end position="43"/>
    </location>
</feature>
<feature type="helix" evidence="9">
    <location>
        <begin position="47"/>
        <end position="53"/>
    </location>
</feature>
<feature type="strand" evidence="9">
    <location>
        <begin position="56"/>
        <end position="58"/>
    </location>
</feature>
<feature type="strand" evidence="9">
    <location>
        <begin position="60"/>
        <end position="65"/>
    </location>
</feature>
<feature type="strand" evidence="9">
    <location>
        <begin position="71"/>
        <end position="76"/>
    </location>
</feature>
<feature type="strand" evidence="9">
    <location>
        <begin position="80"/>
        <end position="82"/>
    </location>
</feature>
<feature type="helix" evidence="9">
    <location>
        <begin position="85"/>
        <end position="89"/>
    </location>
</feature>
<feature type="helix" evidence="9">
    <location>
        <begin position="91"/>
        <end position="102"/>
    </location>
</feature>
<feature type="helix" evidence="9">
    <location>
        <begin position="104"/>
        <end position="112"/>
    </location>
</feature>
<feature type="helix" evidence="9">
    <location>
        <begin position="120"/>
        <end position="126"/>
    </location>
</feature>
<feature type="helix" evidence="9">
    <location>
        <begin position="139"/>
        <end position="149"/>
    </location>
</feature>
<feature type="helix" evidence="9">
    <location>
        <begin position="152"/>
        <end position="154"/>
    </location>
</feature>
<feature type="strand" evidence="9">
    <location>
        <begin position="161"/>
        <end position="163"/>
    </location>
</feature>
<feature type="helix" evidence="9">
    <location>
        <begin position="169"/>
        <end position="171"/>
    </location>
</feature>
<feature type="strand" evidence="9">
    <location>
        <begin position="172"/>
        <end position="175"/>
    </location>
</feature>
<feature type="strand" evidence="9">
    <location>
        <begin position="180"/>
        <end position="182"/>
    </location>
</feature>
<feature type="strand" evidence="9">
    <location>
        <begin position="189"/>
        <end position="191"/>
    </location>
</feature>
<feature type="helix" evidence="9">
    <location>
        <begin position="194"/>
        <end position="204"/>
    </location>
</feature>
<feature type="helix" evidence="9">
    <location>
        <begin position="207"/>
        <end position="209"/>
    </location>
</feature>
<feature type="helix" evidence="9">
    <location>
        <begin position="210"/>
        <end position="217"/>
    </location>
</feature>
<feature type="helix" evidence="9">
    <location>
        <begin position="223"/>
        <end position="243"/>
    </location>
</feature>
<feature type="turn" evidence="9">
    <location>
        <begin position="250"/>
        <end position="252"/>
    </location>
</feature>
<feature type="helix" evidence="9">
    <location>
        <begin position="253"/>
        <end position="266"/>
    </location>
</feature>
<proteinExistence type="evidence at protein level"/>
<accession>C0SPC1</accession>
<accession>O34935</accession>
<accession>Q795S7</accession>
<name>CCRZ_BACSU</name>
<keyword id="KW-0002">3D-structure</keyword>
<keyword id="KW-0067">ATP-binding</keyword>
<keyword id="KW-0131">Cell cycle</keyword>
<keyword id="KW-0132">Cell division</keyword>
<keyword id="KW-0963">Cytoplasm</keyword>
<keyword id="KW-0227">DNA damage</keyword>
<keyword id="KW-0235">DNA replication</keyword>
<keyword id="KW-0418">Kinase</keyword>
<keyword id="KW-0547">Nucleotide-binding</keyword>
<keyword id="KW-1185">Reference proteome</keyword>
<keyword id="KW-0808">Transferase</keyword>
<protein>
    <recommendedName>
        <fullName evidence="5 6">Cell cycle regulator CcrZ</fullName>
        <ecNumber evidence="3">2.7.1.15</ecNumber>
        <ecNumber evidence="3">2.7.1.229</ecNumber>
    </recommendedName>
    <alternativeName>
        <fullName evidence="5 6">Cell cycle regulator protein interacting with FtsZ</fullName>
    </alternativeName>
</protein>
<organism>
    <name type="scientific">Bacillus subtilis (strain 168)</name>
    <dbReference type="NCBI Taxonomy" id="224308"/>
    <lineage>
        <taxon>Bacteria</taxon>
        <taxon>Bacillati</taxon>
        <taxon>Bacillota</taxon>
        <taxon>Bacilli</taxon>
        <taxon>Bacillales</taxon>
        <taxon>Bacillaceae</taxon>
        <taxon>Bacillus</taxon>
    </lineage>
</organism>
<dbReference type="EC" id="2.7.1.15" evidence="3"/>
<dbReference type="EC" id="2.7.1.229" evidence="3"/>
<dbReference type="EMBL" id="AF008220">
    <property type="protein sequence ID" value="AAC00284.1"/>
    <property type="molecule type" value="Genomic_DNA"/>
</dbReference>
<dbReference type="EMBL" id="AL009126">
    <property type="protein sequence ID" value="CAB14970.2"/>
    <property type="status" value="ALT_INIT"/>
    <property type="molecule type" value="Genomic_DNA"/>
</dbReference>
<dbReference type="PIR" id="A69997">
    <property type="entry name" value="A69997"/>
</dbReference>
<dbReference type="RefSeq" id="NP_390870.2">
    <property type="nucleotide sequence ID" value="NC_000964.3"/>
</dbReference>
<dbReference type="RefSeq" id="WP_010886595.1">
    <property type="nucleotide sequence ID" value="NC_000964.3"/>
</dbReference>
<dbReference type="PDB" id="7S3L">
    <property type="method" value="X-ray"/>
    <property type="resolution" value="2.60 A"/>
    <property type="chains" value="A=1-269"/>
</dbReference>
<dbReference type="PDBsum" id="7S3L"/>
<dbReference type="SMR" id="C0SPC1"/>
<dbReference type="FunCoup" id="C0SPC1">
    <property type="interactions" value="3"/>
</dbReference>
<dbReference type="STRING" id="224308.BSU29920"/>
<dbReference type="PaxDb" id="224308-BSU29920"/>
<dbReference type="EnsemblBacteria" id="CAB14970">
    <property type="protein sequence ID" value="CAB14970"/>
    <property type="gene ID" value="BSU_29920"/>
</dbReference>
<dbReference type="GeneID" id="936622"/>
<dbReference type="KEGG" id="bsu:BSU29920"/>
<dbReference type="PATRIC" id="fig|224308.43.peg.3133"/>
<dbReference type="eggNOG" id="COG0510">
    <property type="taxonomic scope" value="Bacteria"/>
</dbReference>
<dbReference type="InParanoid" id="C0SPC1"/>
<dbReference type="OrthoDB" id="3171511at2"/>
<dbReference type="PhylomeDB" id="C0SPC1"/>
<dbReference type="BioCyc" id="BSUB:BSU29920-MONOMER"/>
<dbReference type="Proteomes" id="UP000001570">
    <property type="component" value="Chromosome"/>
</dbReference>
<dbReference type="GO" id="GO:0005737">
    <property type="term" value="C:cytoplasm"/>
    <property type="evidence" value="ECO:0000250"/>
    <property type="project" value="UniProtKB"/>
</dbReference>
<dbReference type="GO" id="GO:0005524">
    <property type="term" value="F:ATP binding"/>
    <property type="evidence" value="ECO:0000314"/>
    <property type="project" value="UniProtKB"/>
</dbReference>
<dbReference type="GO" id="GO:0019200">
    <property type="term" value="F:carbohydrate kinase activity"/>
    <property type="evidence" value="ECO:0000314"/>
    <property type="project" value="UniProtKB"/>
</dbReference>
<dbReference type="GO" id="GO:0016773">
    <property type="term" value="F:phosphotransferase activity, alcohol group as acceptor"/>
    <property type="evidence" value="ECO:0000314"/>
    <property type="project" value="UniProtKB"/>
</dbReference>
<dbReference type="GO" id="GO:0004747">
    <property type="term" value="F:ribokinase activity"/>
    <property type="evidence" value="ECO:0000314"/>
    <property type="project" value="UniProtKB"/>
</dbReference>
<dbReference type="GO" id="GO:0051301">
    <property type="term" value="P:cell division"/>
    <property type="evidence" value="ECO:0007669"/>
    <property type="project" value="UniProtKB-KW"/>
</dbReference>
<dbReference type="GO" id="GO:0006974">
    <property type="term" value="P:DNA damage response"/>
    <property type="evidence" value="ECO:0000315"/>
    <property type="project" value="UniProtKB"/>
</dbReference>
<dbReference type="GO" id="GO:0006270">
    <property type="term" value="P:DNA replication initiation"/>
    <property type="evidence" value="ECO:0000315"/>
    <property type="project" value="UniProtKB"/>
</dbReference>
<dbReference type="Gene3D" id="3.90.1200.10">
    <property type="match status" value="1"/>
</dbReference>
<dbReference type="InterPro" id="IPR002575">
    <property type="entry name" value="Aminoglycoside_PTrfase"/>
</dbReference>
<dbReference type="InterPro" id="IPR052077">
    <property type="entry name" value="CcrZ_PhaseVar_Mediator"/>
</dbReference>
<dbReference type="InterPro" id="IPR011009">
    <property type="entry name" value="Kinase-like_dom_sf"/>
</dbReference>
<dbReference type="PANTHER" id="PTHR40086:SF1">
    <property type="entry name" value="CELL CYCLE REGULATOR CCRZ"/>
    <property type="match status" value="1"/>
</dbReference>
<dbReference type="PANTHER" id="PTHR40086">
    <property type="entry name" value="PHOSPHOTRANSFERASE YTMP-RELATED"/>
    <property type="match status" value="1"/>
</dbReference>
<dbReference type="Pfam" id="PF01636">
    <property type="entry name" value="APH"/>
    <property type="match status" value="1"/>
</dbReference>
<dbReference type="SUPFAM" id="SSF56112">
    <property type="entry name" value="Protein kinase-like (PK-like)"/>
    <property type="match status" value="1"/>
</dbReference>
<sequence>MNIDMNWLGQLLGSDWEIFPAGGATGDAYYAKHNGQQLFLKRNSSPFLAVLSAEGIVPKLVWTKRMENGDVITAQHWMTGRELKPKDMSGRPVAELLRKIHTSKALLDMLKRLGKEPLNPGALLSQLKQAVFAVQQSSPLIQEGIKYLEEHLHEVHFGEKVVCHCDVNHNNWLLSEDNQLYLIDWDGAMIADPAMDLGPLLYHYVEKPAWESWLSMYGIELTESLRLRMAWYVLSETITFIAWHKAKGNDKEFHDAMEELHILMKRIVD</sequence>
<reference key="1">
    <citation type="journal article" date="1997" name="Microbiology">
        <title>Sequencing and functional annotation of the Bacillus subtilis genes in the 200 kb rrnB-dnaB region.</title>
        <authorList>
            <person name="Lapidus A."/>
            <person name="Galleron N."/>
            <person name="Sorokin A."/>
            <person name="Ehrlich S.D."/>
        </authorList>
    </citation>
    <scope>NUCLEOTIDE SEQUENCE [GENOMIC DNA]</scope>
    <source>
        <strain>168</strain>
    </source>
</reference>
<reference key="2">
    <citation type="journal article" date="1997" name="Nature">
        <title>The complete genome sequence of the Gram-positive bacterium Bacillus subtilis.</title>
        <authorList>
            <person name="Kunst F."/>
            <person name="Ogasawara N."/>
            <person name="Moszer I."/>
            <person name="Albertini A.M."/>
            <person name="Alloni G."/>
            <person name="Azevedo V."/>
            <person name="Bertero M.G."/>
            <person name="Bessieres P."/>
            <person name="Bolotin A."/>
            <person name="Borchert S."/>
            <person name="Borriss R."/>
            <person name="Boursier L."/>
            <person name="Brans A."/>
            <person name="Braun M."/>
            <person name="Brignell S.C."/>
            <person name="Bron S."/>
            <person name="Brouillet S."/>
            <person name="Bruschi C.V."/>
            <person name="Caldwell B."/>
            <person name="Capuano V."/>
            <person name="Carter N.M."/>
            <person name="Choi S.-K."/>
            <person name="Codani J.-J."/>
            <person name="Connerton I.F."/>
            <person name="Cummings N.J."/>
            <person name="Daniel R.A."/>
            <person name="Denizot F."/>
            <person name="Devine K.M."/>
            <person name="Duesterhoeft A."/>
            <person name="Ehrlich S.D."/>
            <person name="Emmerson P.T."/>
            <person name="Entian K.-D."/>
            <person name="Errington J."/>
            <person name="Fabret C."/>
            <person name="Ferrari E."/>
            <person name="Foulger D."/>
            <person name="Fritz C."/>
            <person name="Fujita M."/>
            <person name="Fujita Y."/>
            <person name="Fuma S."/>
            <person name="Galizzi A."/>
            <person name="Galleron N."/>
            <person name="Ghim S.-Y."/>
            <person name="Glaser P."/>
            <person name="Goffeau A."/>
            <person name="Golightly E.J."/>
            <person name="Grandi G."/>
            <person name="Guiseppi G."/>
            <person name="Guy B.J."/>
            <person name="Haga K."/>
            <person name="Haiech J."/>
            <person name="Harwood C.R."/>
            <person name="Henaut A."/>
            <person name="Hilbert H."/>
            <person name="Holsappel S."/>
            <person name="Hosono S."/>
            <person name="Hullo M.-F."/>
            <person name="Itaya M."/>
            <person name="Jones L.-M."/>
            <person name="Joris B."/>
            <person name="Karamata D."/>
            <person name="Kasahara Y."/>
            <person name="Klaerr-Blanchard M."/>
            <person name="Klein C."/>
            <person name="Kobayashi Y."/>
            <person name="Koetter P."/>
            <person name="Koningstein G."/>
            <person name="Krogh S."/>
            <person name="Kumano M."/>
            <person name="Kurita K."/>
            <person name="Lapidus A."/>
            <person name="Lardinois S."/>
            <person name="Lauber J."/>
            <person name="Lazarevic V."/>
            <person name="Lee S.-M."/>
            <person name="Levine A."/>
            <person name="Liu H."/>
            <person name="Masuda S."/>
            <person name="Mauel C."/>
            <person name="Medigue C."/>
            <person name="Medina N."/>
            <person name="Mellado R.P."/>
            <person name="Mizuno M."/>
            <person name="Moestl D."/>
            <person name="Nakai S."/>
            <person name="Noback M."/>
            <person name="Noone D."/>
            <person name="O'Reilly M."/>
            <person name="Ogawa K."/>
            <person name="Ogiwara A."/>
            <person name="Oudega B."/>
            <person name="Park S.-H."/>
            <person name="Parro V."/>
            <person name="Pohl T.M."/>
            <person name="Portetelle D."/>
            <person name="Porwollik S."/>
            <person name="Prescott A.M."/>
            <person name="Presecan E."/>
            <person name="Pujic P."/>
            <person name="Purnelle B."/>
            <person name="Rapoport G."/>
            <person name="Rey M."/>
            <person name="Reynolds S."/>
            <person name="Rieger M."/>
            <person name="Rivolta C."/>
            <person name="Rocha E."/>
            <person name="Roche B."/>
            <person name="Rose M."/>
            <person name="Sadaie Y."/>
            <person name="Sato T."/>
            <person name="Scanlan E."/>
            <person name="Schleich S."/>
            <person name="Schroeter R."/>
            <person name="Scoffone F."/>
            <person name="Sekiguchi J."/>
            <person name="Sekowska A."/>
            <person name="Seror S.J."/>
            <person name="Serror P."/>
            <person name="Shin B.-S."/>
            <person name="Soldo B."/>
            <person name="Sorokin A."/>
            <person name="Tacconi E."/>
            <person name="Takagi T."/>
            <person name="Takahashi H."/>
            <person name="Takemaru K."/>
            <person name="Takeuchi M."/>
            <person name="Tamakoshi A."/>
            <person name="Tanaka T."/>
            <person name="Terpstra P."/>
            <person name="Tognoni A."/>
            <person name="Tosato V."/>
            <person name="Uchiyama S."/>
            <person name="Vandenbol M."/>
            <person name="Vannier F."/>
            <person name="Vassarotti A."/>
            <person name="Viari A."/>
            <person name="Wambutt R."/>
            <person name="Wedler E."/>
            <person name="Wedler H."/>
            <person name="Weitzenegger T."/>
            <person name="Winters P."/>
            <person name="Wipat A."/>
            <person name="Yamamoto H."/>
            <person name="Yamane K."/>
            <person name="Yasumoto K."/>
            <person name="Yata K."/>
            <person name="Yoshida K."/>
            <person name="Yoshikawa H.-F."/>
            <person name="Zumstein E."/>
            <person name="Yoshikawa H."/>
            <person name="Danchin A."/>
        </authorList>
    </citation>
    <scope>NUCLEOTIDE SEQUENCE [LARGE SCALE GENOMIC DNA]</scope>
    <source>
        <strain>168</strain>
    </source>
</reference>
<reference key="3">
    <citation type="journal article" date="2021" name="Nat. Microbiol.">
        <title>CcrZ is a pneumococcal spatiotemporal cell cycle regulator that interacts with FtsZ and controls DNA replication by modulating the activity of DnaA.</title>
        <authorList>
            <person name="Gallay C."/>
            <person name="Sanselicio S."/>
            <person name="Anderson M.E."/>
            <person name="Soh Y.M."/>
            <person name="Liu X."/>
            <person name="Stamsaas G.A."/>
            <person name="Pelliciari S."/>
            <person name="van Raaphorst R."/>
            <person name="Denereaz J."/>
            <person name="Kjos M."/>
            <person name="Murray H."/>
            <person name="Gruber S."/>
            <person name="Grossman A.D."/>
            <person name="Veening J.W."/>
        </authorList>
    </citation>
    <scope>DISRUPTION PHENOTYPE</scope>
    <source>
        <strain evidence="5">168 / 1A700</strain>
    </source>
</reference>
<reference key="4">
    <citation type="journal article" date="2022" name="Mol. Microbiol.">
        <title>Multiple mechanisms for overcoming lethal over-initiation of DNA replication.</title>
        <authorList>
            <person name="Anderson M.E."/>
            <person name="Smith J.L."/>
            <person name="Grossman A.D."/>
        </authorList>
    </citation>
    <scope>DISRUPTION PHENOTYPE</scope>
    <source>
        <strain>168 / JH642</strain>
    </source>
</reference>
<reference key="5">
    <citation type="journal article" date="2022" name="PLoS Genet.">
        <title>Structure and kinase activity of bacterial cell cycle regulator CcrZ.</title>
        <authorList>
            <person name="Wozniak K.J."/>
            <person name="Burby P.E."/>
            <person name="Nandakumar J."/>
            <person name="Simmons L.A."/>
        </authorList>
    </citation>
    <scope>X-RAY CRYSTALLOGRAPHY (2.60 ANGSTROMS) IN COMPLEX WITH ATP ANALOG AMP-PNP</scope>
    <scope>FUNCTION</scope>
    <scope>CATALYTIC ACTIVITY</scope>
    <scope>ACTIVITY REGULATION</scope>
    <scope>SUBUNIT</scope>
    <scope>INTERACTION WITH DNAA AND DNAB</scope>
    <scope>DISRUPTION PHENOTYPE</scope>
    <scope>ACTIVE SITE</scope>
    <scope>MUTAGENESIS OF ALA-21; PHE-47; ARG-65; SER-103; ARG-112; ASP-166; ASN-168; ASN-171; ASP-184; PHE-240 AND TRP-243</scope>
    <source>
        <strain evidence="6">168 / PY79</strain>
    </source>
</reference>